<feature type="transit peptide" description="Chloroplast" evidence="3">
    <location>
        <begin position="1"/>
        <end position="30"/>
    </location>
</feature>
<feature type="chain" id="PRO_0000348418" description="Beta-myrcene/(E)-beta-ocimene synthase 2, chloroplastic">
    <location>
        <begin position="31"/>
        <end position="598"/>
    </location>
</feature>
<feature type="short sequence motif" description="DDXXD motif" evidence="2">
    <location>
        <begin position="344"/>
        <end position="348"/>
    </location>
</feature>
<feature type="binding site" evidence="2">
    <location>
        <position position="307"/>
    </location>
    <ligand>
        <name>(2E)-geranyl diphosphate</name>
        <dbReference type="ChEBI" id="CHEBI:58057"/>
    </ligand>
</feature>
<feature type="binding site" evidence="2">
    <location>
        <position position="344"/>
    </location>
    <ligand>
        <name>(2E)-geranyl diphosphate</name>
        <dbReference type="ChEBI" id="CHEBI:58057"/>
    </ligand>
</feature>
<feature type="binding site" evidence="2">
    <location>
        <position position="344"/>
    </location>
    <ligand>
        <name>Mg(2+)</name>
        <dbReference type="ChEBI" id="CHEBI:18420"/>
        <label>1</label>
    </ligand>
</feature>
<feature type="binding site" evidence="2">
    <location>
        <position position="344"/>
    </location>
    <ligand>
        <name>Mg(2+)</name>
        <dbReference type="ChEBI" id="CHEBI:18420"/>
        <label>2</label>
    </ligand>
</feature>
<feature type="binding site" evidence="2">
    <location>
        <position position="348"/>
    </location>
    <ligand>
        <name>(2E)-geranyl diphosphate</name>
        <dbReference type="ChEBI" id="CHEBI:58057"/>
    </ligand>
</feature>
<feature type="binding site" evidence="2">
    <location>
        <position position="348"/>
    </location>
    <ligand>
        <name>Mg(2+)</name>
        <dbReference type="ChEBI" id="CHEBI:18420"/>
        <label>1</label>
    </ligand>
</feature>
<feature type="binding site" evidence="2">
    <location>
        <position position="348"/>
    </location>
    <ligand>
        <name>Mg(2+)</name>
        <dbReference type="ChEBI" id="CHEBI:18420"/>
        <label>2</label>
    </ligand>
</feature>
<feature type="binding site" evidence="2">
    <location>
        <position position="486"/>
    </location>
    <ligand>
        <name>(2E)-geranyl diphosphate</name>
        <dbReference type="ChEBI" id="CHEBI:58057"/>
    </ligand>
</feature>
<feature type="binding site" evidence="2">
    <location>
        <position position="489"/>
    </location>
    <ligand>
        <name>(2E)-geranyl diphosphate</name>
        <dbReference type="ChEBI" id="CHEBI:58057"/>
    </ligand>
</feature>
<feature type="binding site" evidence="2">
    <location>
        <position position="489"/>
    </location>
    <ligand>
        <name>Mg(2+)</name>
        <dbReference type="ChEBI" id="CHEBI:18420"/>
        <label>3</label>
    </ligand>
</feature>
<feature type="binding site" evidence="2">
    <location>
        <position position="493"/>
    </location>
    <ligand>
        <name>Mg(2+)</name>
        <dbReference type="ChEBI" id="CHEBI:18420"/>
        <label>3</label>
    </ligand>
</feature>
<feature type="binding site" evidence="2">
    <location>
        <position position="497"/>
    </location>
    <ligand>
        <name>Mg(2+)</name>
        <dbReference type="ChEBI" id="CHEBI:18420"/>
        <label>3</label>
    </ligand>
</feature>
<feature type="sequence conflict" description="In Ref. 2; AAO85532." evidence="5" ref="2">
    <original>S</original>
    <variation>A</variation>
    <location>
        <position position="32"/>
    </location>
</feature>
<feature type="sequence conflict" description="In Ref. 2; AAO85532." evidence="5" ref="2">
    <original>M</original>
    <variation>I</variation>
    <location>
        <position position="37"/>
    </location>
</feature>
<feature type="sequence conflict" description="In Ref. 2; AAO85532." evidence="5" ref="2">
    <original>N</original>
    <variation>Y</variation>
    <location>
        <position position="41"/>
    </location>
</feature>
<feature type="sequence conflict" description="In Ref. 2; AAO85532." evidence="5" ref="2">
    <original>I</original>
    <variation>T</variation>
    <location>
        <position position="65"/>
    </location>
</feature>
<feature type="sequence conflict" description="In Ref. 2; AAO85532." evidence="5" ref="2">
    <original>G</original>
    <variation>D</variation>
    <location>
        <position position="460"/>
    </location>
</feature>
<feature type="sequence conflict" description="In Ref. 2; AAO85532." evidence="5" ref="2">
    <original>A</original>
    <variation>V</variation>
    <location>
        <position position="543"/>
    </location>
</feature>
<feature type="sequence conflict" description="In Ref. 2; AAO85532." evidence="5" ref="2">
    <original>S</original>
    <variation>I</variation>
    <location>
        <position position="546"/>
    </location>
</feature>
<feature type="sequence conflict" description="In Ref. 2; AAO85532." evidence="5" ref="2">
    <original>R</original>
    <variation>G</variation>
    <location>
        <position position="553"/>
    </location>
</feature>
<dbReference type="EC" id="4.2.3.15" evidence="4"/>
<dbReference type="EMBL" id="AF497484">
    <property type="protein sequence ID" value="AAO85532.1"/>
    <property type="molecule type" value="mRNA"/>
</dbReference>
<dbReference type="EMBL" id="AB028607">
    <property type="protein sequence ID" value="BAA95770.1"/>
    <property type="molecule type" value="Genomic_DNA"/>
</dbReference>
<dbReference type="EMBL" id="CP002686">
    <property type="protein sequence ID" value="AEE77072.1"/>
    <property type="molecule type" value="Genomic_DNA"/>
</dbReference>
<dbReference type="EMBL" id="BT053763">
    <property type="protein sequence ID" value="ACL13990.1"/>
    <property type="molecule type" value="mRNA"/>
</dbReference>
<dbReference type="RefSeq" id="NP_189209.2">
    <property type="nucleotide sequence ID" value="NM_113482.5"/>
</dbReference>
<dbReference type="SMR" id="Q9LRZ6"/>
<dbReference type="BioGRID" id="7504">
    <property type="interactions" value="1"/>
</dbReference>
<dbReference type="FunCoup" id="Q9LRZ6">
    <property type="interactions" value="12"/>
</dbReference>
<dbReference type="IntAct" id="Q9LRZ6">
    <property type="interactions" value="1"/>
</dbReference>
<dbReference type="STRING" id="3702.Q9LRZ6"/>
<dbReference type="PaxDb" id="3702-AT3G25810.1"/>
<dbReference type="ProteomicsDB" id="251358"/>
<dbReference type="EnsemblPlants" id="AT3G25810.1">
    <property type="protein sequence ID" value="AT3G25810.1"/>
    <property type="gene ID" value="AT3G25810"/>
</dbReference>
<dbReference type="GeneID" id="822173"/>
<dbReference type="Gramene" id="AT3G25810.1">
    <property type="protein sequence ID" value="AT3G25810.1"/>
    <property type="gene ID" value="AT3G25810"/>
</dbReference>
<dbReference type="KEGG" id="ath:AT3G25810"/>
<dbReference type="Araport" id="AT3G25810"/>
<dbReference type="TAIR" id="AT3G25810"/>
<dbReference type="eggNOG" id="ENOG502QUH3">
    <property type="taxonomic scope" value="Eukaryota"/>
</dbReference>
<dbReference type="HOGENOM" id="CLU_003125_7_1_1"/>
<dbReference type="InParanoid" id="Q9LRZ6"/>
<dbReference type="OMA" id="TRWYIAV"/>
<dbReference type="PhylomeDB" id="Q9LRZ6"/>
<dbReference type="BioCyc" id="ARA:AT3G25810-MONOMER"/>
<dbReference type="BioCyc" id="MetaCyc:AT3G25810-MONOMER"/>
<dbReference type="UniPathway" id="UPA00213"/>
<dbReference type="PRO" id="PR:Q9LRZ6"/>
<dbReference type="Proteomes" id="UP000006548">
    <property type="component" value="Chromosome 3"/>
</dbReference>
<dbReference type="ExpressionAtlas" id="Q9LRZ6">
    <property type="expression patterns" value="baseline and differential"/>
</dbReference>
<dbReference type="GO" id="GO:0009507">
    <property type="term" value="C:chloroplast"/>
    <property type="evidence" value="ECO:0007669"/>
    <property type="project" value="UniProtKB-SubCell"/>
</dbReference>
<dbReference type="GO" id="GO:0050552">
    <property type="term" value="F:(4S)-limonene synthase activity"/>
    <property type="evidence" value="ECO:0000314"/>
    <property type="project" value="TAIR"/>
</dbReference>
<dbReference type="GO" id="GO:0034768">
    <property type="term" value="F:(E)-beta-ocimene synthase activity"/>
    <property type="evidence" value="ECO:0000314"/>
    <property type="project" value="TAIR"/>
</dbReference>
<dbReference type="GO" id="GO:0034002">
    <property type="term" value="F:(R)-limonene synthase activity"/>
    <property type="evidence" value="ECO:0000314"/>
    <property type="project" value="TAIR"/>
</dbReference>
<dbReference type="GO" id="GO:0000287">
    <property type="term" value="F:magnesium ion binding"/>
    <property type="evidence" value="ECO:0007669"/>
    <property type="project" value="InterPro"/>
</dbReference>
<dbReference type="GO" id="GO:0050551">
    <property type="term" value="F:myrcene synthase activity"/>
    <property type="evidence" value="ECO:0000314"/>
    <property type="project" value="TAIR"/>
</dbReference>
<dbReference type="GO" id="GO:0050550">
    <property type="term" value="F:pinene synthase activity"/>
    <property type="evidence" value="ECO:0000314"/>
    <property type="project" value="TAIR"/>
</dbReference>
<dbReference type="GO" id="GO:0080015">
    <property type="term" value="F:sabinene synthase activity"/>
    <property type="evidence" value="ECO:0000314"/>
    <property type="project" value="TAIR"/>
</dbReference>
<dbReference type="GO" id="GO:0010334">
    <property type="term" value="F:sesquiterpene synthase activity"/>
    <property type="evidence" value="ECO:0000314"/>
    <property type="project" value="TAIR"/>
</dbReference>
<dbReference type="GO" id="GO:0016102">
    <property type="term" value="P:diterpenoid biosynthetic process"/>
    <property type="evidence" value="ECO:0007669"/>
    <property type="project" value="InterPro"/>
</dbReference>
<dbReference type="GO" id="GO:0043693">
    <property type="term" value="P:monoterpene biosynthetic process"/>
    <property type="evidence" value="ECO:0000314"/>
    <property type="project" value="TAIR"/>
</dbReference>
<dbReference type="CDD" id="cd00684">
    <property type="entry name" value="Terpene_cyclase_plant_C1"/>
    <property type="match status" value="1"/>
</dbReference>
<dbReference type="FunFam" id="1.10.600.10:FF:000007">
    <property type="entry name" value="Isoprene synthase, chloroplastic"/>
    <property type="match status" value="1"/>
</dbReference>
<dbReference type="Gene3D" id="1.10.600.10">
    <property type="entry name" value="Farnesyl Diphosphate Synthase"/>
    <property type="match status" value="1"/>
</dbReference>
<dbReference type="Gene3D" id="1.50.10.130">
    <property type="entry name" value="Terpene synthase, N-terminal domain"/>
    <property type="match status" value="1"/>
</dbReference>
<dbReference type="InterPro" id="IPR008949">
    <property type="entry name" value="Isoprenoid_synthase_dom_sf"/>
</dbReference>
<dbReference type="InterPro" id="IPR034741">
    <property type="entry name" value="Terpene_cyclase-like_1_C"/>
</dbReference>
<dbReference type="InterPro" id="IPR044814">
    <property type="entry name" value="Terpene_cyclase_plant_C1"/>
</dbReference>
<dbReference type="InterPro" id="IPR001906">
    <property type="entry name" value="Terpene_synth_N"/>
</dbReference>
<dbReference type="InterPro" id="IPR036965">
    <property type="entry name" value="Terpene_synth_N_sf"/>
</dbReference>
<dbReference type="InterPro" id="IPR050148">
    <property type="entry name" value="Terpene_synthase-like"/>
</dbReference>
<dbReference type="InterPro" id="IPR005630">
    <property type="entry name" value="Terpene_synthase_metal-bd"/>
</dbReference>
<dbReference type="InterPro" id="IPR008930">
    <property type="entry name" value="Terpenoid_cyclase/PrenylTrfase"/>
</dbReference>
<dbReference type="PANTHER" id="PTHR31225:SF62">
    <property type="entry name" value="BETA-MYRCENE_(E)-BETA-OCIMENE SYNTHASE 2, CHLOROPLASTIC"/>
    <property type="match status" value="1"/>
</dbReference>
<dbReference type="PANTHER" id="PTHR31225">
    <property type="entry name" value="OS04G0344100 PROTEIN-RELATED"/>
    <property type="match status" value="1"/>
</dbReference>
<dbReference type="Pfam" id="PF01397">
    <property type="entry name" value="Terpene_synth"/>
    <property type="match status" value="1"/>
</dbReference>
<dbReference type="Pfam" id="PF03936">
    <property type="entry name" value="Terpene_synth_C"/>
    <property type="match status" value="1"/>
</dbReference>
<dbReference type="SFLD" id="SFLDS00005">
    <property type="entry name" value="Isoprenoid_Synthase_Type_I"/>
    <property type="match status" value="1"/>
</dbReference>
<dbReference type="SFLD" id="SFLDG01019">
    <property type="entry name" value="Terpene_Cyclase_Like_1_C_Termi"/>
    <property type="match status" value="1"/>
</dbReference>
<dbReference type="SUPFAM" id="SSF48239">
    <property type="entry name" value="Terpenoid cyclases/Protein prenyltransferases"/>
    <property type="match status" value="1"/>
</dbReference>
<dbReference type="SUPFAM" id="SSF48576">
    <property type="entry name" value="Terpenoid synthases"/>
    <property type="match status" value="1"/>
</dbReference>
<accession>Q9LRZ6</accession>
<accession>B7ZWS1</accession>
<accession>Q84UV1</accession>
<name>MYRS2_ARATH</name>
<keyword id="KW-0150">Chloroplast</keyword>
<keyword id="KW-0456">Lyase</keyword>
<keyword id="KW-0460">Magnesium</keyword>
<keyword id="KW-0464">Manganese</keyword>
<keyword id="KW-0479">Metal-binding</keyword>
<keyword id="KW-0934">Plastid</keyword>
<keyword id="KW-1185">Reference proteome</keyword>
<keyword id="KW-0809">Transit peptide</keyword>
<proteinExistence type="evidence at protein level"/>
<gene>
    <name type="primary">TPS24</name>
    <name evidence="7" type="ordered locus">At3g25810</name>
    <name evidence="8" type="ORF">K13N2.7</name>
</gene>
<evidence type="ECO:0000250" key="1">
    <source>
        <dbReference type="UniProtKB" id="A0A1C9J6A7"/>
    </source>
</evidence>
<evidence type="ECO:0000250" key="2">
    <source>
        <dbReference type="UniProtKB" id="Q40577"/>
    </source>
</evidence>
<evidence type="ECO:0000255" key="3"/>
<evidence type="ECO:0000269" key="4">
    <source>
    </source>
</evidence>
<evidence type="ECO:0000305" key="5"/>
<evidence type="ECO:0000305" key="6">
    <source>
    </source>
</evidence>
<evidence type="ECO:0000312" key="7">
    <source>
        <dbReference type="Araport" id="AT3G25810"/>
    </source>
</evidence>
<evidence type="ECO:0000312" key="8">
    <source>
        <dbReference type="EMBL" id="BAA95770.1"/>
    </source>
</evidence>
<organism>
    <name type="scientific">Arabidopsis thaliana</name>
    <name type="common">Mouse-ear cress</name>
    <dbReference type="NCBI Taxonomy" id="3702"/>
    <lineage>
        <taxon>Eukaryota</taxon>
        <taxon>Viridiplantae</taxon>
        <taxon>Streptophyta</taxon>
        <taxon>Embryophyta</taxon>
        <taxon>Tracheophyta</taxon>
        <taxon>Spermatophyta</taxon>
        <taxon>Magnoliopsida</taxon>
        <taxon>eudicotyledons</taxon>
        <taxon>Gunneridae</taxon>
        <taxon>Pentapetalae</taxon>
        <taxon>rosids</taxon>
        <taxon>malvids</taxon>
        <taxon>Brassicales</taxon>
        <taxon>Brassicaceae</taxon>
        <taxon>Camelineae</taxon>
        <taxon>Arabidopsis</taxon>
    </lineage>
</organism>
<comment type="function">
    <text evidence="4">Involved in monoterpene (C10) biosynthesis. The major products are alpha- and beta-pinene, sabinene, beta-myrcene, (E)-beta-ocimene and limonene.</text>
</comment>
<comment type="catalytic activity">
    <reaction evidence="4">
        <text>(2E)-geranyl diphosphate = beta-myrcene + diphosphate</text>
        <dbReference type="Rhea" id="RHEA:16965"/>
        <dbReference type="ChEBI" id="CHEBI:17221"/>
        <dbReference type="ChEBI" id="CHEBI:33019"/>
        <dbReference type="ChEBI" id="CHEBI:58057"/>
        <dbReference type="EC" id="4.2.3.15"/>
    </reaction>
</comment>
<comment type="cofactor">
    <cofactor evidence="1">
        <name>Mg(2+)</name>
        <dbReference type="ChEBI" id="CHEBI:18420"/>
    </cofactor>
    <cofactor evidence="1">
        <name>Mn(2+)</name>
        <dbReference type="ChEBI" id="CHEBI:29035"/>
    </cofactor>
    <text evidence="1">Binds 3 Mg(2+) or Mn(2+) ions per subunit.</text>
</comment>
<comment type="biophysicochemical properties">
    <kinetics>
        <Vmax evidence="4">1.7 pmol/sec/mg enzyme toward geranyl diphosphate</Vmax>
    </kinetics>
</comment>
<comment type="pathway">
    <text evidence="6">Secondary metabolite biosynthesis; terpenoid biosynthesis.</text>
</comment>
<comment type="subcellular location">
    <subcellularLocation>
        <location evidence="3">Plastid</location>
        <location evidence="3">Chloroplast</location>
    </subcellularLocation>
</comment>
<comment type="tissue specificity">
    <text evidence="4">Expressed exclusively in mature flowers, but not in inmmature buds.</text>
</comment>
<comment type="domain">
    <text evidence="2">The Asp-Asp-Xaa-Xaa-Asp/Glu (DDXXD/E) motif is important for the catalytic activity, presumably through binding to Mg(2+).</text>
</comment>
<comment type="similarity">
    <text evidence="5">Belongs to the terpene synthase family. Tpsb subfamily.</text>
</comment>
<reference key="1">
    <citation type="journal article" date="2003" name="Plant Cell">
        <title>Biosynthesis and emission of terpenoid volatiles from Arabidopsis flowers.</title>
        <authorList>
            <person name="Chen F."/>
            <person name="Tholl D."/>
            <person name="D'Auria J.C."/>
            <person name="Farooq A."/>
            <person name="Pichersky E."/>
            <person name="Gershenzon J."/>
        </authorList>
    </citation>
    <scope>NUCLEOTIDE SEQUENCE [MRNA]</scope>
    <scope>FUNCTION</scope>
    <scope>BIOPHYSICOCHEMICAL PROPERTIES</scope>
    <scope>CATALYTIC ACTIVITY</scope>
    <scope>TISSUE SPECIFICITY</scope>
    <source>
        <strain>cv. Landsberg erecta</strain>
    </source>
</reference>
<reference key="2">
    <citation type="journal article" date="2000" name="DNA Res.">
        <title>Structural analysis of Arabidopsis thaliana chromosome 3. I. Sequence features of the regions of 4,504,864 bp covered by sixty P1 and TAC clones.</title>
        <authorList>
            <person name="Sato S."/>
            <person name="Nakamura Y."/>
            <person name="Kaneko T."/>
            <person name="Katoh T."/>
            <person name="Asamizu E."/>
            <person name="Tabata S."/>
        </authorList>
    </citation>
    <scope>NUCLEOTIDE SEQUENCE [LARGE SCALE GENOMIC DNA]</scope>
    <source>
        <strain>cv. Columbia</strain>
    </source>
</reference>
<reference key="3">
    <citation type="journal article" date="2017" name="Plant J.">
        <title>Araport11: a complete reannotation of the Arabidopsis thaliana reference genome.</title>
        <authorList>
            <person name="Cheng C.Y."/>
            <person name="Krishnakumar V."/>
            <person name="Chan A.P."/>
            <person name="Thibaud-Nissen F."/>
            <person name="Schobel S."/>
            <person name="Town C.D."/>
        </authorList>
    </citation>
    <scope>GENOME REANNOTATION</scope>
    <source>
        <strain>cv. Columbia</strain>
    </source>
</reference>
<reference key="4">
    <citation type="submission" date="2009-01" db="EMBL/GenBank/DDBJ databases">
        <title>Arabidopsis ORF clones.</title>
        <authorList>
            <person name="De Los Reyes C."/>
            <person name="Quan R."/>
            <person name="Chen H."/>
            <person name="Bautista V.R."/>
            <person name="Kim C.J."/>
            <person name="Ecker J.R."/>
        </authorList>
    </citation>
    <scope>NUCLEOTIDE SEQUENCE [LARGE SCALE MRNA]</scope>
    <source>
        <strain>cv. Columbia</strain>
    </source>
</reference>
<reference key="5">
    <citation type="journal article" date="2002" name="Mol. Genet. Genomics">
        <title>Genomic analysis of the terpenoid synthase (AtTPS) gene family of Arabidopsis thaliana.</title>
        <authorList>
            <person name="Aubourg S."/>
            <person name="Lecharny A."/>
            <person name="Bohlmann J."/>
        </authorList>
    </citation>
    <scope>GENE FAMILY</scope>
    <scope>NOMENCLATURE</scope>
</reference>
<reference key="6">
    <citation type="journal article" date="2003" name="Plant Mol. Biol.">
        <title>Genome organization in Arabidopsis thaliana: a survey for genes involved in isoprenoid and chlorophyll metabolism.</title>
        <authorList>
            <person name="Lange B.M."/>
            <person name="Ghassemian M."/>
        </authorList>
    </citation>
    <scope>GENE FAMILY</scope>
</reference>
<protein>
    <recommendedName>
        <fullName>Beta-myrcene/(E)-beta-ocimene synthase 2, chloroplastic</fullName>
        <ecNumber evidence="4">4.2.3.15</ecNumber>
    </recommendedName>
    <alternativeName>
        <fullName>Terpenoid synthase 24</fullName>
        <shortName>AtTPS24</shortName>
    </alternativeName>
</protein>
<sequence length="598" mass="69812">MATLCIGSAPIYQNACIHNFRLQRPRRFISKSMTKTMPDANPLDLRRRSGNYQPSSWDHSYLLSIENKYVNEKEVITRHVLKKKVKKMLEEVETKSRLEKLELIDDLQKLGVSYHFEQEINNILTNFHLENGKNIWKCDKEEDLHATALEFRLLRQHGFGVSEDIFDVIIDKIESNTFKSDNITSIITLYEASYLSTKSDTKLHKVIRPFATEQIRNFVDDESETYNIMLREMAIHALEIPYHWRMRRLETRWYIDAYEKKHDMNLFLAEFAKIDFNIVQTAHQEDVKYVSCWWKETGLGSQLHFVRDRIVENYFWTVGMIYEPQFGYIRRIVAIVAALITVIDDIYDIYGTPEELELFTAMVQNWDINRLDELPEYMKLCFLTLFNEINAMGCDVLKCKNIDVIPYFKKSWADLCKAYLVEAKWYKGGYKPSVEEYMQNAWISISAPTMLIHFYCAFSGQISVQILESLVQQQQDVVRCSATVLRLANDLATSPDELARGDVLKSVQCYMHETGVSEEEARTHVQQMISHTWDEMNYEARTAARSSSLLSRRFVETAMNLARMSQCMYQHGDGHGCPDKAKIVDRVQTLLVDPIPLD</sequence>